<sequence>MPTIQQLIRTERQTLSRKTKSPALRSCPERRGVCTRVYTSTPKKPNSALRKVARVRLTSGFEVTAYIPGIGHNLQEHSVVLIRGGRVKDLPGVRYHIIRGTLDTAGVKDRRQSRSKYGAKAPKE</sequence>
<protein>
    <recommendedName>
        <fullName evidence="2">Small ribosomal subunit protein uS12</fullName>
    </recommendedName>
    <alternativeName>
        <fullName evidence="4">30S ribosomal protein S12</fullName>
    </alternativeName>
</protein>
<proteinExistence type="inferred from homology"/>
<organism>
    <name type="scientific">Synechococcus sp. (strain RCC307)</name>
    <dbReference type="NCBI Taxonomy" id="316278"/>
    <lineage>
        <taxon>Bacteria</taxon>
        <taxon>Bacillati</taxon>
        <taxon>Cyanobacteriota</taxon>
        <taxon>Cyanophyceae</taxon>
        <taxon>Synechococcales</taxon>
        <taxon>Synechococcaceae</taxon>
        <taxon>Synechococcus</taxon>
    </lineage>
</organism>
<gene>
    <name evidence="2" type="primary">rpsL</name>
    <name evidence="2" type="synonym">rps12</name>
    <name type="ordered locus">SynRCC307_2167</name>
</gene>
<reference key="1">
    <citation type="submission" date="2006-05" db="EMBL/GenBank/DDBJ databases">
        <authorList>
            <consortium name="Genoscope"/>
        </authorList>
    </citation>
    <scope>NUCLEOTIDE SEQUENCE [LARGE SCALE GENOMIC DNA]</scope>
    <source>
        <strain>RCC307</strain>
    </source>
</reference>
<evidence type="ECO:0000250" key="1"/>
<evidence type="ECO:0000255" key="2">
    <source>
        <dbReference type="HAMAP-Rule" id="MF_00403"/>
    </source>
</evidence>
<evidence type="ECO:0000256" key="3">
    <source>
        <dbReference type="SAM" id="MobiDB-lite"/>
    </source>
</evidence>
<evidence type="ECO:0000305" key="4"/>
<accession>A5GW11</accession>
<comment type="function">
    <text evidence="2">With S4 and S5 plays an important role in translational accuracy.</text>
</comment>
<comment type="function">
    <text evidence="2">Interacts with and stabilizes bases of the 16S rRNA that are involved in tRNA selection in the A site and with the mRNA backbone. Located at the interface of the 30S and 50S subunits, it traverses the body of the 30S subunit contacting proteins on the other side and probably holding the rRNA structure together. The combined cluster of proteins S8, S12 and S17 appears to hold together the shoulder and platform of the 30S subunit.</text>
</comment>
<comment type="subunit">
    <text evidence="2">Part of the 30S ribosomal subunit. Contacts proteins S8 and S17. May interact with IF1 in the 30S initiation complex.</text>
</comment>
<comment type="similarity">
    <text evidence="2">Belongs to the universal ribosomal protein uS12 family.</text>
</comment>
<keyword id="KW-0488">Methylation</keyword>
<keyword id="KW-1185">Reference proteome</keyword>
<keyword id="KW-0687">Ribonucleoprotein</keyword>
<keyword id="KW-0689">Ribosomal protein</keyword>
<keyword id="KW-0694">RNA-binding</keyword>
<keyword id="KW-0699">rRNA-binding</keyword>
<keyword id="KW-0820">tRNA-binding</keyword>
<dbReference type="EMBL" id="CT978603">
    <property type="protein sequence ID" value="CAK29070.1"/>
    <property type="molecule type" value="Genomic_DNA"/>
</dbReference>
<dbReference type="SMR" id="A5GW11"/>
<dbReference type="STRING" id="316278.SynRCC307_2167"/>
<dbReference type="KEGG" id="syr:SynRCC307_2167"/>
<dbReference type="eggNOG" id="COG0048">
    <property type="taxonomic scope" value="Bacteria"/>
</dbReference>
<dbReference type="HOGENOM" id="CLU_104295_1_2_3"/>
<dbReference type="OrthoDB" id="9802366at2"/>
<dbReference type="Proteomes" id="UP000001115">
    <property type="component" value="Chromosome"/>
</dbReference>
<dbReference type="GO" id="GO:0015935">
    <property type="term" value="C:small ribosomal subunit"/>
    <property type="evidence" value="ECO:0007669"/>
    <property type="project" value="InterPro"/>
</dbReference>
<dbReference type="GO" id="GO:0019843">
    <property type="term" value="F:rRNA binding"/>
    <property type="evidence" value="ECO:0007669"/>
    <property type="project" value="UniProtKB-UniRule"/>
</dbReference>
<dbReference type="GO" id="GO:0003735">
    <property type="term" value="F:structural constituent of ribosome"/>
    <property type="evidence" value="ECO:0007669"/>
    <property type="project" value="InterPro"/>
</dbReference>
<dbReference type="GO" id="GO:0000049">
    <property type="term" value="F:tRNA binding"/>
    <property type="evidence" value="ECO:0007669"/>
    <property type="project" value="UniProtKB-UniRule"/>
</dbReference>
<dbReference type="GO" id="GO:0006412">
    <property type="term" value="P:translation"/>
    <property type="evidence" value="ECO:0007669"/>
    <property type="project" value="UniProtKB-UniRule"/>
</dbReference>
<dbReference type="CDD" id="cd03368">
    <property type="entry name" value="Ribosomal_S12"/>
    <property type="match status" value="1"/>
</dbReference>
<dbReference type="FunFam" id="2.40.50.140:FF:000001">
    <property type="entry name" value="30S ribosomal protein S12"/>
    <property type="match status" value="1"/>
</dbReference>
<dbReference type="Gene3D" id="2.40.50.140">
    <property type="entry name" value="Nucleic acid-binding proteins"/>
    <property type="match status" value="1"/>
</dbReference>
<dbReference type="HAMAP" id="MF_00403_B">
    <property type="entry name" value="Ribosomal_uS12_B"/>
    <property type="match status" value="1"/>
</dbReference>
<dbReference type="InterPro" id="IPR012340">
    <property type="entry name" value="NA-bd_OB-fold"/>
</dbReference>
<dbReference type="InterPro" id="IPR006032">
    <property type="entry name" value="Ribosomal_uS12"/>
</dbReference>
<dbReference type="InterPro" id="IPR005679">
    <property type="entry name" value="Ribosomal_uS12_bac"/>
</dbReference>
<dbReference type="NCBIfam" id="TIGR00981">
    <property type="entry name" value="rpsL_bact"/>
    <property type="match status" value="1"/>
</dbReference>
<dbReference type="PANTHER" id="PTHR11652">
    <property type="entry name" value="30S RIBOSOMAL PROTEIN S12 FAMILY MEMBER"/>
    <property type="match status" value="1"/>
</dbReference>
<dbReference type="Pfam" id="PF00164">
    <property type="entry name" value="Ribosom_S12_S23"/>
    <property type="match status" value="1"/>
</dbReference>
<dbReference type="PIRSF" id="PIRSF002133">
    <property type="entry name" value="Ribosomal_S12/S23"/>
    <property type="match status" value="1"/>
</dbReference>
<dbReference type="PRINTS" id="PR01034">
    <property type="entry name" value="RIBOSOMALS12"/>
</dbReference>
<dbReference type="SUPFAM" id="SSF50249">
    <property type="entry name" value="Nucleic acid-binding proteins"/>
    <property type="match status" value="1"/>
</dbReference>
<dbReference type="PROSITE" id="PS00055">
    <property type="entry name" value="RIBOSOMAL_S12"/>
    <property type="match status" value="1"/>
</dbReference>
<feature type="chain" id="PRO_1000049816" description="Small ribosomal subunit protein uS12">
    <location>
        <begin position="1"/>
        <end position="124"/>
    </location>
</feature>
<feature type="region of interest" description="Disordered" evidence="3">
    <location>
        <begin position="9"/>
        <end position="28"/>
    </location>
</feature>
<feature type="region of interest" description="Disordered" evidence="3">
    <location>
        <begin position="104"/>
        <end position="124"/>
    </location>
</feature>
<feature type="modified residue" description="3-methylthioaspartic acid" evidence="1">
    <location>
        <position position="89"/>
    </location>
</feature>
<name>RS12_SYNR3</name>